<sequence length="184" mass="21105">MSNLDNIINEILEDAKKESEHILNDANQEKEKIIETKIDQANQEKDTILKKAESEAKGVYDRHLSQVVLKSRDNALFAKQEVIDSVLQKIKDKLKNMSLEDYKKYLTNSLSKMDLNSDDLLVLQSDKYDSLKNENFNVKLSDETVDSGFCIKRGNVLINNNFSSLVDSMKDELEVEIAKTLFKK</sequence>
<dbReference type="EMBL" id="AP008971">
    <property type="protein sequence ID" value="BAG08495.1"/>
    <property type="molecule type" value="Genomic_DNA"/>
</dbReference>
<dbReference type="RefSeq" id="WP_002840342.1">
    <property type="nucleotide sequence ID" value="NC_010376.1"/>
</dbReference>
<dbReference type="SMR" id="B0S2A5"/>
<dbReference type="STRING" id="334413.FMG_1077"/>
<dbReference type="KEGG" id="fma:FMG_1077"/>
<dbReference type="eggNOG" id="COG1390">
    <property type="taxonomic scope" value="Bacteria"/>
</dbReference>
<dbReference type="HOGENOM" id="CLU_105846_3_1_9"/>
<dbReference type="Proteomes" id="UP000001319">
    <property type="component" value="Chromosome"/>
</dbReference>
<dbReference type="GO" id="GO:0033178">
    <property type="term" value="C:proton-transporting two-sector ATPase complex, catalytic domain"/>
    <property type="evidence" value="ECO:0007669"/>
    <property type="project" value="InterPro"/>
</dbReference>
<dbReference type="GO" id="GO:0005524">
    <property type="term" value="F:ATP binding"/>
    <property type="evidence" value="ECO:0007669"/>
    <property type="project" value="UniProtKB-UniRule"/>
</dbReference>
<dbReference type="GO" id="GO:0046933">
    <property type="term" value="F:proton-transporting ATP synthase activity, rotational mechanism"/>
    <property type="evidence" value="ECO:0007669"/>
    <property type="project" value="UniProtKB-UniRule"/>
</dbReference>
<dbReference type="GO" id="GO:0046961">
    <property type="term" value="F:proton-transporting ATPase activity, rotational mechanism"/>
    <property type="evidence" value="ECO:0007669"/>
    <property type="project" value="InterPro"/>
</dbReference>
<dbReference type="GO" id="GO:0042777">
    <property type="term" value="P:proton motive force-driven plasma membrane ATP synthesis"/>
    <property type="evidence" value="ECO:0007669"/>
    <property type="project" value="UniProtKB-UniRule"/>
</dbReference>
<dbReference type="Gene3D" id="1.20.5.620">
    <property type="entry name" value="F1F0 ATP synthase subunit B, membrane domain"/>
    <property type="match status" value="1"/>
</dbReference>
<dbReference type="HAMAP" id="MF_00311">
    <property type="entry name" value="ATP_synth_E_arch"/>
    <property type="match status" value="1"/>
</dbReference>
<dbReference type="InterPro" id="IPR028987">
    <property type="entry name" value="ATP_synth_B-like_membr_sf"/>
</dbReference>
<dbReference type="InterPro" id="IPR002842">
    <property type="entry name" value="ATPase_V1_Esu"/>
</dbReference>
<dbReference type="Pfam" id="PF01991">
    <property type="entry name" value="vATP-synt_E"/>
    <property type="match status" value="1"/>
</dbReference>
<dbReference type="SUPFAM" id="SSF81573">
    <property type="entry name" value="F1F0 ATP synthase subunit B, membrane domain"/>
    <property type="match status" value="1"/>
</dbReference>
<dbReference type="SUPFAM" id="SSF160527">
    <property type="entry name" value="V-type ATPase subunit E-like"/>
    <property type="match status" value="1"/>
</dbReference>
<comment type="function">
    <text evidence="1">Produces ATP from ADP in the presence of a proton gradient across the membrane.</text>
</comment>
<comment type="similarity">
    <text evidence="1">Belongs to the V-ATPase E subunit family.</text>
</comment>
<name>VATE_FINM2</name>
<reference key="1">
    <citation type="journal article" date="2008" name="DNA Res.">
        <title>Complete genome sequence of Finegoldia magna, an anaerobic opportunistic pathogen.</title>
        <authorList>
            <person name="Goto T."/>
            <person name="Yamashita A."/>
            <person name="Hirakawa H."/>
            <person name="Matsutani M."/>
            <person name="Todo K."/>
            <person name="Ohshima K."/>
            <person name="Toh H."/>
            <person name="Miyamoto K."/>
            <person name="Kuhara S."/>
            <person name="Hattori M."/>
            <person name="Shimizu T."/>
            <person name="Akimoto S."/>
        </authorList>
    </citation>
    <scope>NUCLEOTIDE SEQUENCE [LARGE SCALE GENOMIC DNA]</scope>
    <source>
        <strain>ATCC 29328 / DSM 20472 / WAL 2508</strain>
    </source>
</reference>
<keyword id="KW-0066">ATP synthesis</keyword>
<keyword id="KW-0375">Hydrogen ion transport</keyword>
<keyword id="KW-0406">Ion transport</keyword>
<keyword id="KW-1185">Reference proteome</keyword>
<keyword id="KW-0813">Transport</keyword>
<accession>B0S2A5</accession>
<protein>
    <recommendedName>
        <fullName evidence="1">V-type proton ATPase subunit E</fullName>
    </recommendedName>
    <alternativeName>
        <fullName evidence="1">V-ATPase subunit E</fullName>
    </alternativeName>
</protein>
<gene>
    <name evidence="1" type="primary">atpE</name>
    <name type="ordered locus">FMG_1077</name>
</gene>
<feature type="chain" id="PRO_1000115677" description="V-type proton ATPase subunit E">
    <location>
        <begin position="1"/>
        <end position="184"/>
    </location>
</feature>
<proteinExistence type="inferred from homology"/>
<evidence type="ECO:0000255" key="1">
    <source>
        <dbReference type="HAMAP-Rule" id="MF_00311"/>
    </source>
</evidence>
<organism>
    <name type="scientific">Finegoldia magna (strain ATCC 29328 / DSM 20472 / WAL 2508)</name>
    <name type="common">Peptostreptococcus magnus</name>
    <dbReference type="NCBI Taxonomy" id="334413"/>
    <lineage>
        <taxon>Bacteria</taxon>
        <taxon>Bacillati</taxon>
        <taxon>Bacillota</taxon>
        <taxon>Tissierellia</taxon>
        <taxon>Tissierellales</taxon>
        <taxon>Peptoniphilaceae</taxon>
        <taxon>Finegoldia</taxon>
    </lineage>
</organism>